<organism>
    <name type="scientific">Borreliella burgdorferi (strain ATCC 35210 / DSM 4680 / CIP 102532 / B31)</name>
    <name type="common">Borrelia burgdorferi</name>
    <dbReference type="NCBI Taxonomy" id="224326"/>
    <lineage>
        <taxon>Bacteria</taxon>
        <taxon>Pseudomonadati</taxon>
        <taxon>Spirochaetota</taxon>
        <taxon>Spirochaetia</taxon>
        <taxon>Spirochaetales</taxon>
        <taxon>Borreliaceae</taxon>
        <taxon>Borreliella</taxon>
    </lineage>
</organism>
<dbReference type="EMBL" id="AY894344">
    <property type="protein sequence ID" value="AAX69071.1"/>
    <property type="molecule type" value="Genomic_DNA"/>
</dbReference>
<dbReference type="EMBL" id="AE000785">
    <property type="protein sequence ID" value="AAC66050.1"/>
    <property type="molecule type" value="Genomic_DNA"/>
</dbReference>
<dbReference type="PIR" id="C70226">
    <property type="entry name" value="C70226"/>
</dbReference>
<dbReference type="RefSeq" id="NP_045423.1">
    <property type="nucleotide sequence ID" value="NC_001850.1"/>
</dbReference>
<dbReference type="RefSeq" id="WP_010890264.1">
    <property type="nucleotide sequence ID" value="NC_001850.1"/>
</dbReference>
<dbReference type="EnsemblBacteria" id="AAC66050">
    <property type="protein sequence ID" value="AAC66050"/>
    <property type="gene ID" value="BB_E16"/>
</dbReference>
<dbReference type="KEGG" id="bbu:BB_E16"/>
<dbReference type="PATRIC" id="fig|224326.49.peg.1277"/>
<dbReference type="HOGENOM" id="CLU_1329815_0_0_12"/>
<dbReference type="OrthoDB" id="352197at2"/>
<dbReference type="Proteomes" id="UP000001807">
    <property type="component" value="Plasmid lp25"/>
</dbReference>
<dbReference type="GO" id="GO:0009279">
    <property type="term" value="C:cell outer membrane"/>
    <property type="evidence" value="ECO:0007669"/>
    <property type="project" value="UniProtKB-SubCell"/>
</dbReference>
<dbReference type="InterPro" id="IPR031471">
    <property type="entry name" value="BptA"/>
</dbReference>
<dbReference type="NCBIfam" id="NF045772">
    <property type="entry name" value="VirAssocBptA"/>
    <property type="match status" value="1"/>
</dbReference>
<dbReference type="Pfam" id="PF17044">
    <property type="entry name" value="BPTA"/>
    <property type="match status" value="1"/>
</dbReference>
<geneLocation type="plasmid">
    <name>lp25</name>
</geneLocation>
<comment type="function">
    <text evidence="2">Virulence-associated protein essential for survival of the bacterium within the tick host and therefore within the natural life cycle of the Lyme disease spirochete.</text>
</comment>
<comment type="subcellular location">
    <subcellularLocation>
        <location evidence="3">Cell outer membrane</location>
    </subcellularLocation>
</comment>
<comment type="similarity">
    <text evidence="3">Belongs to the BptA family.</text>
</comment>
<evidence type="ECO:0000255" key="1"/>
<evidence type="ECO:0000269" key="2">
    <source>
    </source>
</evidence>
<evidence type="ECO:0000305" key="3"/>
<proteinExistence type="inferred from homology"/>
<gene>
    <name type="primary">bptA</name>
    <name type="ordered locus">BB_E16</name>
</gene>
<keyword id="KW-0998">Cell outer membrane</keyword>
<keyword id="KW-0472">Membrane</keyword>
<keyword id="KW-0614">Plasmid</keyword>
<keyword id="KW-1185">Reference proteome</keyword>
<keyword id="KW-0732">Signal</keyword>
<keyword id="KW-0843">Virulence</keyword>
<accession>P0CL63</accession>
<accession>O50712</accession>
<accession>Q56NH3</accession>
<accession>Q56NH4</accession>
<sequence>MGKILFFGLLLICIFLGFFFYKQKENNVIYNKIVEKFDDNVFVDETYTYLFKDSNLKELVFIKSQLIIPELKHKKMIKATGYRADAYKALSTVYRFDFKVHDNKILGFKSVIFEGFEDAKVSKHENNLPSEKWQQLKDFNIGDPNINEKFFHLEFPFVVKNTLCVTISKGFFKKIKKLKRLKIMLISNEDREYKIDIENFLPKYNL</sequence>
<feature type="signal peptide" evidence="1">
    <location>
        <begin position="1"/>
        <end position="19"/>
    </location>
</feature>
<feature type="chain" id="PRO_0000238481" description="Protein BptA">
    <location>
        <begin position="20"/>
        <end position="206"/>
    </location>
</feature>
<feature type="sequence variant" description="In strain: 297.">
    <original>V</original>
    <variation>I</variation>
    <location>
        <position position="28"/>
    </location>
</feature>
<feature type="sequence variant" description="In strain: 297.">
    <original>K</original>
    <variation>E</variation>
    <location>
        <position position="72"/>
    </location>
</feature>
<feature type="sequence variant" description="In strain: 297.">
    <original>KMIKA</original>
    <variation>EMMKS</variation>
    <location>
        <begin position="75"/>
        <end position="79"/>
    </location>
</feature>
<feature type="sequence variant" description="In strain: 297.">
    <original>M</original>
    <variation>I</variation>
    <location>
        <position position="184"/>
    </location>
</feature>
<feature type="sequence variant" description="In strain: 297.">
    <original>L</original>
    <variation>F</variation>
    <location>
        <position position="206"/>
    </location>
</feature>
<reference key="1">
    <citation type="journal article" date="2005" name="Proc. Natl. Acad. Sci. U.S.A.">
        <title>bptA (bbe16) is essential for the persistence of the Lyme disease spirochete, Borrelia burgdorferi, in its natural tick vector.</title>
        <authorList>
            <person name="Revel A.T."/>
            <person name="Blevins J.S."/>
            <person name="Almazan C."/>
            <person name="Neil L."/>
            <person name="Kocan K.M."/>
            <person name="de la Fuente J."/>
            <person name="Hagman K.E."/>
            <person name="Norgard M.V."/>
        </authorList>
    </citation>
    <scope>NUCLEOTIDE SEQUENCE [GENOMIC DNA]</scope>
    <scope>FUNCTION</scope>
    <source>
        <strain>ATCC 53899 / 297</strain>
    </source>
</reference>
<reference key="2">
    <citation type="journal article" date="1997" name="Nature">
        <title>Genomic sequence of a Lyme disease spirochaete, Borrelia burgdorferi.</title>
        <authorList>
            <person name="Fraser C.M."/>
            <person name="Casjens S."/>
            <person name="Huang W.M."/>
            <person name="Sutton G.G."/>
            <person name="Clayton R.A."/>
            <person name="Lathigra R."/>
            <person name="White O."/>
            <person name="Ketchum K.A."/>
            <person name="Dodson R.J."/>
            <person name="Hickey E.K."/>
            <person name="Gwinn M.L."/>
            <person name="Dougherty B.A."/>
            <person name="Tomb J.-F."/>
            <person name="Fleischmann R.D."/>
            <person name="Richardson D.L."/>
            <person name="Peterson J.D."/>
            <person name="Kerlavage A.R."/>
            <person name="Quackenbush J."/>
            <person name="Salzberg S.L."/>
            <person name="Hanson M."/>
            <person name="van Vugt R."/>
            <person name="Palmer N."/>
            <person name="Adams M.D."/>
            <person name="Gocayne J.D."/>
            <person name="Weidman J.F."/>
            <person name="Utterback T.R."/>
            <person name="Watthey L."/>
            <person name="McDonald L.A."/>
            <person name="Artiach P."/>
            <person name="Bowman C."/>
            <person name="Garland S.A."/>
            <person name="Fujii C."/>
            <person name="Cotton M.D."/>
            <person name="Horst K."/>
            <person name="Roberts K.M."/>
            <person name="Hatch B."/>
            <person name="Smith H.O."/>
            <person name="Venter J.C."/>
        </authorList>
    </citation>
    <scope>NUCLEOTIDE SEQUENCE [LARGE SCALE GENOMIC DNA]</scope>
    <source>
        <strain>ATCC 35210 / DSM 4680 / CIP 102532 / B31</strain>
    </source>
</reference>
<protein>
    <recommendedName>
        <fullName>Protein BptA</fullName>
    </recommendedName>
    <alternativeName>
        <fullName>Borrelial persistence in ticks protein A</fullName>
    </alternativeName>
</protein>
<name>BPTA_BORBU</name>